<accession>A9WSW5</accession>
<gene>
    <name evidence="2" type="primary">tuf</name>
    <name type="ordered locus">RSal33209_2171</name>
</gene>
<evidence type="ECO:0000250" key="1"/>
<evidence type="ECO:0000255" key="2">
    <source>
        <dbReference type="HAMAP-Rule" id="MF_00118"/>
    </source>
</evidence>
<keyword id="KW-0963">Cytoplasm</keyword>
<keyword id="KW-0251">Elongation factor</keyword>
<keyword id="KW-0342">GTP-binding</keyword>
<keyword id="KW-0378">Hydrolase</keyword>
<keyword id="KW-0460">Magnesium</keyword>
<keyword id="KW-0479">Metal-binding</keyword>
<keyword id="KW-0547">Nucleotide-binding</keyword>
<keyword id="KW-0648">Protein biosynthesis</keyword>
<keyword id="KW-1185">Reference proteome</keyword>
<feature type="chain" id="PRO_1000076107" description="Elongation factor Tu">
    <location>
        <begin position="1"/>
        <end position="396"/>
    </location>
</feature>
<feature type="domain" description="tr-type G">
    <location>
        <begin position="10"/>
        <end position="206"/>
    </location>
</feature>
<feature type="region of interest" description="G1" evidence="1">
    <location>
        <begin position="19"/>
        <end position="26"/>
    </location>
</feature>
<feature type="region of interest" description="G2" evidence="1">
    <location>
        <begin position="62"/>
        <end position="66"/>
    </location>
</feature>
<feature type="region of interest" description="G3" evidence="1">
    <location>
        <begin position="83"/>
        <end position="86"/>
    </location>
</feature>
<feature type="region of interest" description="G4" evidence="1">
    <location>
        <begin position="138"/>
        <end position="141"/>
    </location>
</feature>
<feature type="region of interest" description="G5" evidence="1">
    <location>
        <begin position="176"/>
        <end position="178"/>
    </location>
</feature>
<feature type="binding site" evidence="2">
    <location>
        <begin position="19"/>
        <end position="26"/>
    </location>
    <ligand>
        <name>GTP</name>
        <dbReference type="ChEBI" id="CHEBI:37565"/>
    </ligand>
</feature>
<feature type="binding site" evidence="2">
    <location>
        <position position="26"/>
    </location>
    <ligand>
        <name>Mg(2+)</name>
        <dbReference type="ChEBI" id="CHEBI:18420"/>
    </ligand>
</feature>
<feature type="binding site" evidence="2">
    <location>
        <begin position="83"/>
        <end position="87"/>
    </location>
    <ligand>
        <name>GTP</name>
        <dbReference type="ChEBI" id="CHEBI:37565"/>
    </ligand>
</feature>
<feature type="binding site" evidence="2">
    <location>
        <begin position="138"/>
        <end position="141"/>
    </location>
    <ligand>
        <name>GTP</name>
        <dbReference type="ChEBI" id="CHEBI:37565"/>
    </ligand>
</feature>
<organism>
    <name type="scientific">Renibacterium salmoninarum (strain ATCC 33209 / DSM 20767 / JCM 11484 / NBRC 15589 / NCIMB 2235)</name>
    <dbReference type="NCBI Taxonomy" id="288705"/>
    <lineage>
        <taxon>Bacteria</taxon>
        <taxon>Bacillati</taxon>
        <taxon>Actinomycetota</taxon>
        <taxon>Actinomycetes</taxon>
        <taxon>Micrococcales</taxon>
        <taxon>Micrococcaceae</taxon>
        <taxon>Renibacterium</taxon>
    </lineage>
</organism>
<dbReference type="EC" id="3.6.5.3" evidence="2"/>
<dbReference type="EMBL" id="CP000910">
    <property type="protein sequence ID" value="ABY23903.1"/>
    <property type="molecule type" value="Genomic_DNA"/>
</dbReference>
<dbReference type="RefSeq" id="WP_012245569.1">
    <property type="nucleotide sequence ID" value="NC_010168.1"/>
</dbReference>
<dbReference type="SMR" id="A9WSW5"/>
<dbReference type="STRING" id="288705.RSal33209_2171"/>
<dbReference type="KEGG" id="rsa:RSal33209_2171"/>
<dbReference type="eggNOG" id="COG0050">
    <property type="taxonomic scope" value="Bacteria"/>
</dbReference>
<dbReference type="HOGENOM" id="CLU_007265_0_1_11"/>
<dbReference type="Proteomes" id="UP000002007">
    <property type="component" value="Chromosome"/>
</dbReference>
<dbReference type="GO" id="GO:0005829">
    <property type="term" value="C:cytosol"/>
    <property type="evidence" value="ECO:0007669"/>
    <property type="project" value="TreeGrafter"/>
</dbReference>
<dbReference type="GO" id="GO:0005525">
    <property type="term" value="F:GTP binding"/>
    <property type="evidence" value="ECO:0007669"/>
    <property type="project" value="UniProtKB-UniRule"/>
</dbReference>
<dbReference type="GO" id="GO:0003924">
    <property type="term" value="F:GTPase activity"/>
    <property type="evidence" value="ECO:0007669"/>
    <property type="project" value="InterPro"/>
</dbReference>
<dbReference type="GO" id="GO:0003746">
    <property type="term" value="F:translation elongation factor activity"/>
    <property type="evidence" value="ECO:0007669"/>
    <property type="project" value="UniProtKB-UniRule"/>
</dbReference>
<dbReference type="CDD" id="cd01884">
    <property type="entry name" value="EF_Tu"/>
    <property type="match status" value="1"/>
</dbReference>
<dbReference type="CDD" id="cd03697">
    <property type="entry name" value="EFTU_II"/>
    <property type="match status" value="1"/>
</dbReference>
<dbReference type="CDD" id="cd03707">
    <property type="entry name" value="EFTU_III"/>
    <property type="match status" value="1"/>
</dbReference>
<dbReference type="FunFam" id="2.40.30.10:FF:000001">
    <property type="entry name" value="Elongation factor Tu"/>
    <property type="match status" value="1"/>
</dbReference>
<dbReference type="FunFam" id="3.40.50.300:FF:000003">
    <property type="entry name" value="Elongation factor Tu"/>
    <property type="match status" value="1"/>
</dbReference>
<dbReference type="Gene3D" id="3.40.50.300">
    <property type="entry name" value="P-loop containing nucleotide triphosphate hydrolases"/>
    <property type="match status" value="1"/>
</dbReference>
<dbReference type="Gene3D" id="2.40.30.10">
    <property type="entry name" value="Translation factors"/>
    <property type="match status" value="2"/>
</dbReference>
<dbReference type="HAMAP" id="MF_00118_B">
    <property type="entry name" value="EF_Tu_B"/>
    <property type="match status" value="1"/>
</dbReference>
<dbReference type="InterPro" id="IPR041709">
    <property type="entry name" value="EF-Tu_GTP-bd"/>
</dbReference>
<dbReference type="InterPro" id="IPR050055">
    <property type="entry name" value="EF-Tu_GTPase"/>
</dbReference>
<dbReference type="InterPro" id="IPR004161">
    <property type="entry name" value="EFTu-like_2"/>
</dbReference>
<dbReference type="InterPro" id="IPR033720">
    <property type="entry name" value="EFTU_2"/>
</dbReference>
<dbReference type="InterPro" id="IPR031157">
    <property type="entry name" value="G_TR_CS"/>
</dbReference>
<dbReference type="InterPro" id="IPR027417">
    <property type="entry name" value="P-loop_NTPase"/>
</dbReference>
<dbReference type="InterPro" id="IPR005225">
    <property type="entry name" value="Small_GTP-bd"/>
</dbReference>
<dbReference type="InterPro" id="IPR000795">
    <property type="entry name" value="T_Tr_GTP-bd_dom"/>
</dbReference>
<dbReference type="InterPro" id="IPR009000">
    <property type="entry name" value="Transl_B-barrel_sf"/>
</dbReference>
<dbReference type="InterPro" id="IPR009001">
    <property type="entry name" value="Transl_elong_EF1A/Init_IF2_C"/>
</dbReference>
<dbReference type="InterPro" id="IPR004541">
    <property type="entry name" value="Transl_elong_EFTu/EF1A_bac/org"/>
</dbReference>
<dbReference type="InterPro" id="IPR004160">
    <property type="entry name" value="Transl_elong_EFTu/EF1A_C"/>
</dbReference>
<dbReference type="NCBIfam" id="TIGR00485">
    <property type="entry name" value="EF-Tu"/>
    <property type="match status" value="1"/>
</dbReference>
<dbReference type="NCBIfam" id="NF000766">
    <property type="entry name" value="PRK00049.1"/>
    <property type="match status" value="1"/>
</dbReference>
<dbReference type="NCBIfam" id="NF009372">
    <property type="entry name" value="PRK12735.1"/>
    <property type="match status" value="1"/>
</dbReference>
<dbReference type="NCBIfam" id="NF009373">
    <property type="entry name" value="PRK12736.1"/>
    <property type="match status" value="1"/>
</dbReference>
<dbReference type="NCBIfam" id="TIGR00231">
    <property type="entry name" value="small_GTP"/>
    <property type="match status" value="1"/>
</dbReference>
<dbReference type="PANTHER" id="PTHR43721:SF22">
    <property type="entry name" value="ELONGATION FACTOR TU, MITOCHONDRIAL"/>
    <property type="match status" value="1"/>
</dbReference>
<dbReference type="PANTHER" id="PTHR43721">
    <property type="entry name" value="ELONGATION FACTOR TU-RELATED"/>
    <property type="match status" value="1"/>
</dbReference>
<dbReference type="Pfam" id="PF00009">
    <property type="entry name" value="GTP_EFTU"/>
    <property type="match status" value="1"/>
</dbReference>
<dbReference type="Pfam" id="PF03144">
    <property type="entry name" value="GTP_EFTU_D2"/>
    <property type="match status" value="1"/>
</dbReference>
<dbReference type="Pfam" id="PF03143">
    <property type="entry name" value="GTP_EFTU_D3"/>
    <property type="match status" value="1"/>
</dbReference>
<dbReference type="PRINTS" id="PR00315">
    <property type="entry name" value="ELONGATNFCT"/>
</dbReference>
<dbReference type="SUPFAM" id="SSF50465">
    <property type="entry name" value="EF-Tu/eEF-1alpha/eIF2-gamma C-terminal domain"/>
    <property type="match status" value="1"/>
</dbReference>
<dbReference type="SUPFAM" id="SSF52540">
    <property type="entry name" value="P-loop containing nucleoside triphosphate hydrolases"/>
    <property type="match status" value="1"/>
</dbReference>
<dbReference type="SUPFAM" id="SSF50447">
    <property type="entry name" value="Translation proteins"/>
    <property type="match status" value="1"/>
</dbReference>
<dbReference type="PROSITE" id="PS00301">
    <property type="entry name" value="G_TR_1"/>
    <property type="match status" value="1"/>
</dbReference>
<dbReference type="PROSITE" id="PS51722">
    <property type="entry name" value="G_TR_2"/>
    <property type="match status" value="1"/>
</dbReference>
<comment type="function">
    <text evidence="2">GTP hydrolase that promotes the GTP-dependent binding of aminoacyl-tRNA to the A-site of ribosomes during protein biosynthesis.</text>
</comment>
<comment type="catalytic activity">
    <reaction evidence="2">
        <text>GTP + H2O = GDP + phosphate + H(+)</text>
        <dbReference type="Rhea" id="RHEA:19669"/>
        <dbReference type="ChEBI" id="CHEBI:15377"/>
        <dbReference type="ChEBI" id="CHEBI:15378"/>
        <dbReference type="ChEBI" id="CHEBI:37565"/>
        <dbReference type="ChEBI" id="CHEBI:43474"/>
        <dbReference type="ChEBI" id="CHEBI:58189"/>
        <dbReference type="EC" id="3.6.5.3"/>
    </reaction>
    <physiologicalReaction direction="left-to-right" evidence="2">
        <dbReference type="Rhea" id="RHEA:19670"/>
    </physiologicalReaction>
</comment>
<comment type="subunit">
    <text evidence="2">Monomer.</text>
</comment>
<comment type="subcellular location">
    <subcellularLocation>
        <location evidence="2">Cytoplasm</location>
    </subcellularLocation>
</comment>
<comment type="similarity">
    <text evidence="2">Belongs to the TRAFAC class translation factor GTPase superfamily. Classic translation factor GTPase family. EF-Tu/EF-1A subfamily.</text>
</comment>
<sequence length="396" mass="43708">MAKAKFERTKPHVNIGTIGHVDHGKTTLTAAISKVLYDKYPTLNEQRDFASIDSAPEEKQRGITINISHVEYQTEKRHYAHVDAPGHADYIKNMITGAAQMDGAILVVAATDGPMAQTREHVLLARQVGVPYLLVALNKSDMVEDEELLDLVEMEVRELLSSQEFDGDNAPVVRVSGLKALEGDPQWVKSVEDLMEAVDESVPDPIRDKDKPFLMPIEDVFTITGRGTVVTGRAERGTLAINSEVEIVGIRPIQKTTVTGIEMFHKQLDEAWAGENCGLLLRGIKREDVERGQVVVKPGSITPHTDFEANVYILSKDEGGRHNPFYSNYRPQFYFRTTDVTGVITLPEGTEMVMPGDNTEMTVALIQPIAMEDGLGFAIREGGRTVGSGRVTKIIK</sequence>
<protein>
    <recommendedName>
        <fullName evidence="2">Elongation factor Tu</fullName>
        <shortName evidence="2">EF-Tu</shortName>
        <ecNumber evidence="2">3.6.5.3</ecNumber>
    </recommendedName>
</protein>
<reference key="1">
    <citation type="journal article" date="2008" name="J. Bacteriol.">
        <title>Genome sequence of the fish pathogen Renibacterium salmoninarum suggests reductive evolution away from an environmental Arthrobacter ancestor.</title>
        <authorList>
            <person name="Wiens G.D."/>
            <person name="Rockey D.D."/>
            <person name="Wu Z."/>
            <person name="Chang J."/>
            <person name="Levy R."/>
            <person name="Crane S."/>
            <person name="Chen D.S."/>
            <person name="Capri G.R."/>
            <person name="Burnett J.R."/>
            <person name="Sudheesh P.S."/>
            <person name="Schipma M.J."/>
            <person name="Burd H."/>
            <person name="Bhattacharyya A."/>
            <person name="Rhodes L.D."/>
            <person name="Kaul R."/>
            <person name="Strom M.S."/>
        </authorList>
    </citation>
    <scope>NUCLEOTIDE SEQUENCE [LARGE SCALE GENOMIC DNA]</scope>
    <source>
        <strain>ATCC 33209 / DSM 20767 / JCM 11484 / NBRC 15589 / NCIMB 2235</strain>
    </source>
</reference>
<proteinExistence type="inferred from homology"/>
<name>EFTU_RENSM</name>